<reference key="1">
    <citation type="journal article" date="2009" name="PLoS Biol.">
        <title>Lineage-specific biology revealed by a finished genome assembly of the mouse.</title>
        <authorList>
            <person name="Church D.M."/>
            <person name="Goodstadt L."/>
            <person name="Hillier L.W."/>
            <person name="Zody M.C."/>
            <person name="Goldstein S."/>
            <person name="She X."/>
            <person name="Bult C.J."/>
            <person name="Agarwala R."/>
            <person name="Cherry J.L."/>
            <person name="DiCuccio M."/>
            <person name="Hlavina W."/>
            <person name="Kapustin Y."/>
            <person name="Meric P."/>
            <person name="Maglott D."/>
            <person name="Birtle Z."/>
            <person name="Marques A.C."/>
            <person name="Graves T."/>
            <person name="Zhou S."/>
            <person name="Teague B."/>
            <person name="Potamousis K."/>
            <person name="Churas C."/>
            <person name="Place M."/>
            <person name="Herschleb J."/>
            <person name="Runnheim R."/>
            <person name="Forrest D."/>
            <person name="Amos-Landgraf J."/>
            <person name="Schwartz D.C."/>
            <person name="Cheng Z."/>
            <person name="Lindblad-Toh K."/>
            <person name="Eichler E.E."/>
            <person name="Ponting C.P."/>
        </authorList>
    </citation>
    <scope>NUCLEOTIDE SEQUENCE [LARGE SCALE GENOMIC DNA]</scope>
    <source>
        <strain>C57BL/6J</strain>
    </source>
</reference>
<reference key="2">
    <citation type="journal article" date="2016" name="Science">
        <title>The DNA methyltransferase DNMT3C protects male germ cells from transposon activity.</title>
        <authorList>
            <person name="Barau J."/>
            <person name="Teissandier A."/>
            <person name="Zamudio N."/>
            <person name="Roy S."/>
            <person name="Nalesso V."/>
            <person name="Herault Y."/>
            <person name="Guillou F."/>
            <person name="Bourc'his D."/>
        </authorList>
    </citation>
    <scope>FUNCTION</scope>
    <scope>CATALYTIC ACTIVITY</scope>
    <scope>TISSUE SPECIFICITY</scope>
    <scope>DEVELOPMENTAL STAGE</scope>
    <scope>DISRUPTION PHENOTYPE</scope>
    <scope>ACTIVE SITE</scope>
    <scope>MUTAGENESIS OF CYS-538</scope>
</reference>
<reference key="3">
    <citation type="journal article" date="2017" name="PLoS Genet.">
        <title>rahu is a mutant allele of Dnmt3c, encoding a DNA methyltransferase homolog required for meiosis and transposon repression in the mouse male germline.</title>
        <authorList>
            <person name="Jain D."/>
            <person name="Meydan C."/>
            <person name="Lange J."/>
            <person name="Claeys Bouuaert C."/>
            <person name="Lailler N."/>
            <person name="Mason C.E."/>
            <person name="Anderson K.V."/>
            <person name="Keeney S."/>
        </authorList>
    </citation>
    <scope>FUNCTION</scope>
    <scope>MUTAGENESIS OF GLU-693</scope>
</reference>
<reference key="4">
    <citation type="journal article" date="2020" name="Nature">
        <title>SPOCD1 is an essential executor of piRNA-directed de novo DNA methylation.</title>
        <authorList>
            <person name="Zoch A."/>
            <person name="Auchynnikava T."/>
            <person name="Berrens R.V."/>
            <person name="Kabayama Y."/>
            <person name="Schoepp T."/>
            <person name="Heep M."/>
            <person name="Vasiliauskaite L."/>
            <person name="Perez-Rico Y.A."/>
            <person name="Cook A.G."/>
            <person name="Shkumatava A."/>
            <person name="Rappsilber J."/>
            <person name="Allshire R.C."/>
            <person name="O'Carroll D."/>
        </authorList>
    </citation>
    <scope>INTERACTION WITH SPOCD1</scope>
</reference>
<reference key="5">
    <citation type="journal article" date="2024" name="Mol. Cell">
        <title>C19ORF84 connects piRNA and DNA methylation machineries to defend the mammalian germ line.</title>
        <authorList>
            <person name="Zoch A."/>
            <person name="Konieczny G."/>
            <person name="Auchynnikava T."/>
            <person name="Stallmeyer B."/>
            <person name="Rotte N."/>
            <person name="Heep M."/>
            <person name="Berrens R.V."/>
            <person name="Schito M."/>
            <person name="Kabayama Y."/>
            <person name="Schopp T."/>
            <person name="Kliesch S."/>
            <person name="Houston B."/>
            <person name="Nagirnaja L."/>
            <person name="O'Bryan M.K."/>
            <person name="Aston K.I."/>
            <person name="Conrad D.F."/>
            <person name="Rappsilber J."/>
            <person name="Allshire R.C."/>
            <person name="Cook A.G."/>
            <person name="Tuttelmann F."/>
            <person name="O'Carroll D."/>
        </authorList>
    </citation>
    <scope>FUNCTION</scope>
    <scope>SUBCELLULAR LOCATION</scope>
</reference>
<reference evidence="14" key="6">
    <citation type="journal article" date="2024" name="J. Biol. Chem.">
        <title>The structure of DNA methyltransferase DNMT3C reveals an activity-tuning mechanism for DNA methylation.</title>
        <authorList>
            <person name="Khudaverdyan N."/>
            <person name="Lu J."/>
            <person name="Chen X."/>
            <person name="Herle G."/>
            <person name="Song J."/>
        </authorList>
    </citation>
    <scope>X-RAY CRYSTALLOGRAPHY (3.19 ANGSTROMS) OF 458-740 IN COMPLEX WITH S-ADENOSYL-L-HOMOCYSTEINE AND DNMT3L</scope>
    <scope>FUNCTION</scope>
    <scope>CATALYTIC ACTIVITY</scope>
    <scope>SUBUNIT</scope>
    <scope>INTERACTION WITH DNMT3L</scope>
    <scope>MUTAGENESIS OF CYS-543; GLU-590 AND GLU-693</scope>
</reference>
<organism>
    <name type="scientific">Mus musculus</name>
    <name type="common">Mouse</name>
    <dbReference type="NCBI Taxonomy" id="10090"/>
    <lineage>
        <taxon>Eukaryota</taxon>
        <taxon>Metazoa</taxon>
        <taxon>Chordata</taxon>
        <taxon>Craniata</taxon>
        <taxon>Vertebrata</taxon>
        <taxon>Euteleostomi</taxon>
        <taxon>Mammalia</taxon>
        <taxon>Eutheria</taxon>
        <taxon>Euarchontoglires</taxon>
        <taxon>Glires</taxon>
        <taxon>Rodentia</taxon>
        <taxon>Myomorpha</taxon>
        <taxon>Muroidea</taxon>
        <taxon>Muridae</taxon>
        <taxon>Murinae</taxon>
        <taxon>Mus</taxon>
        <taxon>Mus</taxon>
    </lineage>
</organism>
<protein>
    <recommendedName>
        <fullName evidence="11">DNA (cytosine-5)-methyltransferase 3C</fullName>
        <shortName evidence="10">Dnmt3c</shortName>
        <ecNumber evidence="3 5 9">2.1.1.37</ecNumber>
    </recommendedName>
</protein>
<comment type="function">
    <text evidence="5 6 8 9">DNA methyltransferase that specifically methylates the promoters of evolutionarily young retrotransposons in the male germline (PubMed:27856912, PubMed:28854222, PubMed:38359823, PubMed:39098534). De novo methylation and subsequent repression of transposable elements prevents their mobilization, which is essential for germline integrity (PubMed:27856912, PubMed:28854222, PubMed:38359823). Compared to Dnmt3a and Dnmt3b, shows lower DNA methyltransferase efficiency (PubMed:39098534).</text>
</comment>
<comment type="catalytic activity">
    <reaction evidence="3 5 9">
        <text>a 2'-deoxycytidine in DNA + S-adenosyl-L-methionine = a 5-methyl-2'-deoxycytidine in DNA + S-adenosyl-L-homocysteine + H(+)</text>
        <dbReference type="Rhea" id="RHEA:13681"/>
        <dbReference type="Rhea" id="RHEA-COMP:11369"/>
        <dbReference type="Rhea" id="RHEA-COMP:11370"/>
        <dbReference type="ChEBI" id="CHEBI:15378"/>
        <dbReference type="ChEBI" id="CHEBI:57856"/>
        <dbReference type="ChEBI" id="CHEBI:59789"/>
        <dbReference type="ChEBI" id="CHEBI:85452"/>
        <dbReference type="ChEBI" id="CHEBI:85454"/>
        <dbReference type="EC" id="2.1.1.37"/>
    </reaction>
</comment>
<comment type="subunit">
    <text evidence="7 9">Homodimer (PubMed:39098534). Interacts with DNMT3L (PubMed:39098534). Interacts with SPOCD1; recruiting Dnmt3C to transposons (PubMed:32674113).</text>
</comment>
<comment type="subcellular location">
    <subcellularLocation>
        <location evidence="8">Nucleus</location>
    </subcellularLocation>
</comment>
<comment type="tissue specificity">
    <text evidence="5">Specifically expressed in testis.</text>
</comment>
<comment type="developmental stage">
    <text evidence="5">Expression peaks around 16.5 dpc, when de novo methylation takes place in male germline.</text>
</comment>
<comment type="disruption phenotype">
    <text evidence="5">Mice are viable and healthy but show male sterility due to defects in spermatogenesis (PubMed:27856912). Male mice show hypogonadism and azoospermia with interruption of spermatogenesis at the pachytene stage of meiosis I (PubMed:27856912). Retrotransposons are derepressed due to DNA demethylation (PubMed:27856912).</text>
</comment>
<comment type="similarity">
    <text evidence="2">Belongs to the class I-like SAM-binding methyltransferase superfamily. C5-methyltransferase family.</text>
</comment>
<comment type="caution">
    <text evidence="5">Evolved via a duplication of Dnmt3B and was initially annotated as a pseudogene.</text>
</comment>
<comment type="online information" name="Protein Spotlight">
    <link uri="https://www.proteinspotlight.org/back_issues/207/"/>
    <text>Best left unsaid - Issue 207 of September 2018</text>
</comment>
<feature type="chain" id="PRO_0000439036" description="DNA (cytosine-5)-methyltransferase 3C">
    <location>
        <begin position="1"/>
        <end position="740"/>
    </location>
</feature>
<feature type="domain" description="ADD" evidence="1">
    <location>
        <begin position="309"/>
        <end position="441"/>
    </location>
</feature>
<feature type="domain" description="SAM-dependent MTase C5-type" evidence="2">
    <location>
        <begin position="462"/>
        <end position="740"/>
    </location>
</feature>
<feature type="zinc finger region" description="GATA-type; atypical" evidence="1">
    <location>
        <begin position="320"/>
        <end position="350"/>
    </location>
</feature>
<feature type="zinc finger region" description="PHD-type; atypical" evidence="1">
    <location>
        <begin position="361"/>
        <end position="417"/>
    </location>
</feature>
<feature type="region of interest" description="Disordered" evidence="4">
    <location>
        <begin position="75"/>
        <end position="99"/>
    </location>
</feature>
<feature type="region of interest" description="Disordered" evidence="4">
    <location>
        <begin position="248"/>
        <end position="312"/>
    </location>
</feature>
<feature type="active site" evidence="2 3 5">
    <location>
        <position position="538"/>
    </location>
</feature>
<feature type="binding site" evidence="12 14">
    <location>
        <position position="471"/>
    </location>
    <ligand>
        <name>S-adenosyl-L-methionine</name>
        <dbReference type="ChEBI" id="CHEBI:59789"/>
    </ligand>
</feature>
<feature type="binding site" evidence="12 14">
    <location>
        <position position="473"/>
    </location>
    <ligand>
        <name>S-adenosyl-L-methionine</name>
        <dbReference type="ChEBI" id="CHEBI:59789"/>
    </ligand>
</feature>
<feature type="binding site" evidence="12 14">
    <location>
        <position position="492"/>
    </location>
    <ligand>
        <name>S-adenosyl-L-methionine</name>
        <dbReference type="ChEBI" id="CHEBI:59789"/>
    </ligand>
</feature>
<feature type="binding site" evidence="12 14">
    <location>
        <position position="514"/>
    </location>
    <ligand>
        <name>S-adenosyl-L-methionine</name>
        <dbReference type="ChEBI" id="CHEBI:59789"/>
    </ligand>
</feature>
<feature type="binding site" evidence="12 14">
    <location>
        <position position="515"/>
    </location>
    <ligand>
        <name>S-adenosyl-L-methionine</name>
        <dbReference type="ChEBI" id="CHEBI:59789"/>
    </ligand>
</feature>
<feature type="binding site" evidence="12 14">
    <location>
        <position position="719"/>
    </location>
    <ligand>
        <name>S-adenosyl-L-methionine</name>
        <dbReference type="ChEBI" id="CHEBI:59789"/>
    </ligand>
</feature>
<feature type="binding site" evidence="12 14">
    <location>
        <position position="721"/>
    </location>
    <ligand>
        <name>S-adenosyl-L-methionine</name>
        <dbReference type="ChEBI" id="CHEBI:59789"/>
    </ligand>
</feature>
<feature type="mutagenesis site" description="Loss of methyltransferase activity." evidence="5">
    <original>C</original>
    <variation>A</variation>
    <location>
        <position position="538"/>
    </location>
</feature>
<feature type="mutagenesis site" description="Decreased DNA methyltransferase efficiency." evidence="9">
    <original>C</original>
    <variation>I</variation>
    <variation>N</variation>
    <location>
        <position position="543"/>
    </location>
</feature>
<feature type="mutagenesis site" description="Increased DNA methyltransferase efficiency." evidence="9">
    <original>E</original>
    <variation>G</variation>
    <variation>K</variation>
    <location>
        <position position="590"/>
    </location>
</feature>
<feature type="mutagenesis site" description="In rahu mutant; male sterility due to defects in spermatogenesis, probably caused by transposon derepression due to impaired DNA demethylation. Abolished homodimerization and DNA-binding." evidence="6 9">
    <original>E</original>
    <variation>G</variation>
    <location>
        <position position="693"/>
    </location>
</feature>
<feature type="strand" evidence="15">
    <location>
        <begin position="462"/>
        <end position="468"/>
    </location>
</feature>
<feature type="turn" evidence="15">
    <location>
        <begin position="470"/>
        <end position="472"/>
    </location>
</feature>
<feature type="helix" evidence="15">
    <location>
        <begin position="473"/>
        <end position="480"/>
    </location>
</feature>
<feature type="strand" evidence="15">
    <location>
        <begin position="485"/>
        <end position="491"/>
    </location>
</feature>
<feature type="helix" evidence="15">
    <location>
        <begin position="495"/>
        <end position="504"/>
    </location>
</feature>
<feature type="turn" evidence="15">
    <location>
        <begin position="505"/>
        <end position="507"/>
    </location>
</feature>
<feature type="helix" evidence="15">
    <location>
        <begin position="515"/>
        <end position="517"/>
    </location>
</feature>
<feature type="helix" evidence="15">
    <location>
        <begin position="520"/>
        <end position="526"/>
    </location>
</feature>
<feature type="strand" evidence="15">
    <location>
        <begin position="530"/>
        <end position="534"/>
    </location>
</feature>
<feature type="turn" evidence="15">
    <location>
        <begin position="539"/>
        <end position="541"/>
    </location>
</feature>
<feature type="helix" evidence="15">
    <location>
        <begin position="554"/>
        <end position="558"/>
    </location>
</feature>
<feature type="helix" evidence="15">
    <location>
        <begin position="559"/>
        <end position="569"/>
    </location>
</feature>
<feature type="strand" evidence="15">
    <location>
        <begin position="580"/>
        <end position="589"/>
    </location>
</feature>
<feature type="helix" evidence="15">
    <location>
        <begin position="591"/>
        <end position="601"/>
    </location>
</feature>
<feature type="strand" evidence="15">
    <location>
        <begin position="606"/>
        <end position="608"/>
    </location>
</feature>
<feature type="helix" evidence="15">
    <location>
        <begin position="610"/>
        <end position="612"/>
    </location>
</feature>
<feature type="strand" evidence="15">
    <location>
        <begin position="614"/>
        <end position="616"/>
    </location>
</feature>
<feature type="strand" evidence="15">
    <location>
        <begin position="620"/>
        <end position="624"/>
    </location>
</feature>
<feature type="turn" evidence="15">
    <location>
        <begin position="627"/>
        <end position="630"/>
    </location>
</feature>
<feature type="helix" evidence="15">
    <location>
        <begin position="643"/>
        <end position="646"/>
    </location>
</feature>
<feature type="strand" evidence="15">
    <location>
        <begin position="651"/>
        <end position="654"/>
    </location>
</feature>
<feature type="strand" evidence="15">
    <location>
        <begin position="656"/>
        <end position="658"/>
    </location>
</feature>
<feature type="strand" evidence="15">
    <location>
        <begin position="663"/>
        <end position="665"/>
    </location>
</feature>
<feature type="helix" evidence="15">
    <location>
        <begin position="666"/>
        <end position="668"/>
    </location>
</feature>
<feature type="turn" evidence="15">
    <location>
        <begin position="671"/>
        <end position="674"/>
    </location>
</feature>
<feature type="strand" evidence="15">
    <location>
        <begin position="677"/>
        <end position="680"/>
    </location>
</feature>
<feature type="strand" evidence="15">
    <location>
        <begin position="683"/>
        <end position="685"/>
    </location>
</feature>
<feature type="helix" evidence="15">
    <location>
        <begin position="689"/>
        <end position="696"/>
    </location>
</feature>
<feature type="turn" evidence="15">
    <location>
        <begin position="700"/>
        <end position="703"/>
    </location>
</feature>
<feature type="helix" evidence="15">
    <location>
        <begin position="710"/>
        <end position="718"/>
    </location>
</feature>
<feature type="helix" evidence="15">
    <location>
        <begin position="723"/>
        <end position="730"/>
    </location>
</feature>
<feature type="helix" evidence="15">
    <location>
        <begin position="731"/>
        <end position="735"/>
    </location>
</feature>
<gene>
    <name evidence="10 13" type="primary">Dnmt3c</name>
    <name evidence="13" type="synonym">Gm14490</name>
</gene>
<proteinExistence type="evidence at protein level"/>
<evidence type="ECO:0000255" key="1">
    <source>
        <dbReference type="PROSITE-ProRule" id="PRU00865"/>
    </source>
</evidence>
<evidence type="ECO:0000255" key="2">
    <source>
        <dbReference type="PROSITE-ProRule" id="PRU01016"/>
    </source>
</evidence>
<evidence type="ECO:0000255" key="3">
    <source>
        <dbReference type="PROSITE-ProRule" id="PRU10018"/>
    </source>
</evidence>
<evidence type="ECO:0000256" key="4">
    <source>
        <dbReference type="SAM" id="MobiDB-lite"/>
    </source>
</evidence>
<evidence type="ECO:0000269" key="5">
    <source>
    </source>
</evidence>
<evidence type="ECO:0000269" key="6">
    <source>
    </source>
</evidence>
<evidence type="ECO:0000269" key="7">
    <source>
    </source>
</evidence>
<evidence type="ECO:0000269" key="8">
    <source>
    </source>
</evidence>
<evidence type="ECO:0000269" key="9">
    <source>
    </source>
</evidence>
<evidence type="ECO:0000303" key="10">
    <source>
    </source>
</evidence>
<evidence type="ECO:0000305" key="11"/>
<evidence type="ECO:0000305" key="12">
    <source>
    </source>
</evidence>
<evidence type="ECO:0000312" key="13">
    <source>
        <dbReference type="MGI" id="MGI:3649996"/>
    </source>
</evidence>
<evidence type="ECO:0007744" key="14">
    <source>
        <dbReference type="PDB" id="8TCI"/>
    </source>
</evidence>
<evidence type="ECO:0007829" key="15">
    <source>
        <dbReference type="PDB" id="8TCI"/>
    </source>
</evidence>
<accession>P0DOY1</accession>
<accession>A0A286YDX7</accession>
<keyword id="KW-0002">3D-structure</keyword>
<keyword id="KW-0221">Differentiation</keyword>
<keyword id="KW-0238">DNA-binding</keyword>
<keyword id="KW-0479">Metal-binding</keyword>
<keyword id="KW-0489">Methyltransferase</keyword>
<keyword id="KW-0539">Nucleus</keyword>
<keyword id="KW-1185">Reference proteome</keyword>
<keyword id="KW-0678">Repressor</keyword>
<keyword id="KW-0949">S-adenosyl-L-methionine</keyword>
<keyword id="KW-0744">Spermatogenesis</keyword>
<keyword id="KW-0808">Transferase</keyword>
<keyword id="KW-0862">Zinc</keyword>
<keyword id="KW-0863">Zinc-finger</keyword>
<sequence>MRGGSRHLSNEEDVSGCEDCIIISGTCSDQSSDPKTVPLTQVLEAVCTVENRGCRTSSQPSKRKASSLISYVQDLTGDGDEDRDGEVGGSSGSGTPVMPQLFCETRIPSKTPAPLSWQANTSASTPWLSPASPYPIIDLTDEDVIPQSISTPSVDWSQDSHQEGMDTTQVDAESRDGGNIEYQVSADKLLLSQSCILAAFYKLVPYRESIYRTLEKARVRAGKACPSSPGESLEDQLKPMLEWAHGGFKPTGIEGLKPNKKQPENKSRRRTTNDPAASESSPPKRLKTNSYGGKDRGEDEESREQMASDVTNNKGNLEDHCLSCGRKDPVSFHPLFEGGLCQSCRDRFLELFYMYDEDGYQSYCTVCCEGRELLLCSNTSCCRCFCVECLEVLVGAGTAEDVKLQEPWSCYMCLPQRCHGVLRRRKDWNMRLQDFFTTDPDLEEFEPPKLYPAIPAAKRRPIRVLSLFDGIATGYLVLKELGIKVEKYIASEVCAESIAVGTVKHEGQIKYVDDIRNITKEHIDEWGPFDLVIGGSPCNDLSCVNPVRKGLFEGTGRLFFEFYRLLNYSCPEEEDDRPFFWMFENVVAMEVGDKRDISRFLECNPVMIDAIKVSAAHRARYFWGNLPGMNRPVMASKNDKLELQDCLEFSRTAKLKKVQTITTKSNSIRQGKNQLFPVVMNGKDDVLWCTELERIFGFPEHYTDVSNMGRGARQKLLGRSWSVPVIRHLFAPLKDHFACE</sequence>
<name>DNM3C_MOUSE</name>
<dbReference type="EC" id="2.1.1.37" evidence="3 5 9"/>
<dbReference type="EMBL" id="AL929021">
    <property type="status" value="NOT_ANNOTATED_CDS"/>
    <property type="molecule type" value="Genomic_DNA"/>
</dbReference>
<dbReference type="EMBL" id="AL833803">
    <property type="status" value="NOT_ANNOTATED_CDS"/>
    <property type="molecule type" value="Genomic_DNA"/>
</dbReference>
<dbReference type="RefSeq" id="NP_001411976.1">
    <property type="nucleotide sequence ID" value="NM_001425047.1"/>
</dbReference>
<dbReference type="PDB" id="8TCI">
    <property type="method" value="X-ray"/>
    <property type="resolution" value="3.19 A"/>
    <property type="chains" value="A/D=458-740"/>
</dbReference>
<dbReference type="PDBsum" id="8TCI"/>
<dbReference type="SMR" id="P0DOY1"/>
<dbReference type="FunCoup" id="P0DOY1">
    <property type="interactions" value="203"/>
</dbReference>
<dbReference type="STRING" id="10090.ENSMUSP00000153622"/>
<dbReference type="ProteomicsDB" id="277481"/>
<dbReference type="ProteomicsDB" id="349212"/>
<dbReference type="Ensembl" id="ENSMUST00000119996.3">
    <property type="protein sequence ID" value="ENSMUSP00000153622.2"/>
    <property type="gene ID" value="ENSMUSG00000082079.3"/>
</dbReference>
<dbReference type="GeneID" id="668932"/>
<dbReference type="AGR" id="MGI:3649996"/>
<dbReference type="MGI" id="MGI:3649996">
    <property type="gene designation" value="Dnmt3c"/>
</dbReference>
<dbReference type="VEuPathDB" id="HostDB:ENSMUSG00000082079"/>
<dbReference type="GeneTree" id="ENSGT00940000156928"/>
<dbReference type="InParanoid" id="P0DOY1"/>
<dbReference type="OMA" id="CLMFQAG"/>
<dbReference type="OrthoDB" id="641149at2759"/>
<dbReference type="PRO" id="PR:P0DOY1"/>
<dbReference type="Proteomes" id="UP000000589">
    <property type="component" value="Chromosome 2"/>
</dbReference>
<dbReference type="RNAct" id="P0DOY1">
    <property type="molecule type" value="protein"/>
</dbReference>
<dbReference type="Bgee" id="ENSMUSG00000082079">
    <property type="expression patterns" value="Expressed in blastoderm cell in morula and 9 other cell types or tissues"/>
</dbReference>
<dbReference type="GO" id="GO:0005654">
    <property type="term" value="C:nucleoplasm"/>
    <property type="evidence" value="ECO:0000304"/>
    <property type="project" value="Reactome"/>
</dbReference>
<dbReference type="GO" id="GO:0005634">
    <property type="term" value="C:nucleus"/>
    <property type="evidence" value="ECO:0000314"/>
    <property type="project" value="FlyBase"/>
</dbReference>
<dbReference type="GO" id="GO:0003886">
    <property type="term" value="F:DNA (cytosine-5-)-methyltransferase activity"/>
    <property type="evidence" value="ECO:0000315"/>
    <property type="project" value="UniProtKB"/>
</dbReference>
<dbReference type="GO" id="GO:0051718">
    <property type="term" value="F:DNA (cytosine-5-)-methyltransferase activity, acting on CpG substrates"/>
    <property type="evidence" value="ECO:0000314"/>
    <property type="project" value="UniProtKB"/>
</dbReference>
<dbReference type="GO" id="GO:0003677">
    <property type="term" value="F:DNA binding"/>
    <property type="evidence" value="ECO:0007669"/>
    <property type="project" value="UniProtKB-KW"/>
</dbReference>
<dbReference type="GO" id="GO:0008270">
    <property type="term" value="F:zinc ion binding"/>
    <property type="evidence" value="ECO:0007669"/>
    <property type="project" value="UniProtKB-KW"/>
</dbReference>
<dbReference type="GO" id="GO:0030154">
    <property type="term" value="P:cell differentiation"/>
    <property type="evidence" value="ECO:0007669"/>
    <property type="project" value="UniProtKB-KW"/>
</dbReference>
<dbReference type="GO" id="GO:0141176">
    <property type="term" value="P:gene silencing by piRNA-directed DNA methylation"/>
    <property type="evidence" value="ECO:0000314"/>
    <property type="project" value="MGI"/>
</dbReference>
<dbReference type="GO" id="GO:0007129">
    <property type="term" value="P:homologous chromosome pairing at meiosis"/>
    <property type="evidence" value="ECO:0000315"/>
    <property type="project" value="MGI"/>
</dbReference>
<dbReference type="GO" id="GO:0007141">
    <property type="term" value="P:male meiosis I"/>
    <property type="evidence" value="ECO:0000315"/>
    <property type="project" value="UniProtKB"/>
</dbReference>
<dbReference type="GO" id="GO:0032259">
    <property type="term" value="P:methylation"/>
    <property type="evidence" value="ECO:0007669"/>
    <property type="project" value="UniProtKB-KW"/>
</dbReference>
<dbReference type="GO" id="GO:0007283">
    <property type="term" value="P:spermatogenesis"/>
    <property type="evidence" value="ECO:0000315"/>
    <property type="project" value="UniProtKB"/>
</dbReference>
<dbReference type="GO" id="GO:0141005">
    <property type="term" value="P:transposable element silencing by heterochromatin formation"/>
    <property type="evidence" value="ECO:0000314"/>
    <property type="project" value="MGI"/>
</dbReference>
<dbReference type="GO" id="GO:0141196">
    <property type="term" value="P:transposable element silencing by piRNA-mediated DNA methylation"/>
    <property type="evidence" value="ECO:0000316"/>
    <property type="project" value="FlyBase"/>
</dbReference>
<dbReference type="GO" id="GO:0141006">
    <property type="term" value="P:transposable element silencing by piRNA-mediated heterochromatin formation"/>
    <property type="evidence" value="ECO:0000315"/>
    <property type="project" value="UniProtKB"/>
</dbReference>
<dbReference type="FunFam" id="3.40.50.150:FF:000008">
    <property type="entry name" value="DNA (Cytosine-5)-methyltransferase 3A isoform X1"/>
    <property type="match status" value="1"/>
</dbReference>
<dbReference type="FunFam" id="1.10.720.50:FF:000001">
    <property type="entry name" value="DNA (Cytosine-5)-methyltransferase 3B isoform X2"/>
    <property type="match status" value="1"/>
</dbReference>
<dbReference type="Gene3D" id="1.10.720.50">
    <property type="entry name" value="PWWP, helical domain"/>
    <property type="match status" value="1"/>
</dbReference>
<dbReference type="Gene3D" id="3.40.50.150">
    <property type="entry name" value="Vaccinia Virus protein VP39"/>
    <property type="match status" value="2"/>
</dbReference>
<dbReference type="InterPro" id="IPR025766">
    <property type="entry name" value="ADD"/>
</dbReference>
<dbReference type="InterPro" id="IPR018117">
    <property type="entry name" value="C5_DNA_meth_AS"/>
</dbReference>
<dbReference type="InterPro" id="IPR001525">
    <property type="entry name" value="C5_MeTfrase"/>
</dbReference>
<dbReference type="InterPro" id="IPR040552">
    <property type="entry name" value="DNMT3_ADD_GATA1-like"/>
</dbReference>
<dbReference type="InterPro" id="IPR049554">
    <property type="entry name" value="DNMT3_ADD_PHD"/>
</dbReference>
<dbReference type="InterPro" id="IPR029063">
    <property type="entry name" value="SAM-dependent_MTases_sf"/>
</dbReference>
<dbReference type="InterPro" id="IPR011011">
    <property type="entry name" value="Znf_FYVE_PHD"/>
</dbReference>
<dbReference type="PANTHER" id="PTHR23068:SF55">
    <property type="entry name" value="DNA (CYTOSINE-5)-METHYLTRANSFERASE 3C"/>
    <property type="match status" value="1"/>
</dbReference>
<dbReference type="PANTHER" id="PTHR23068">
    <property type="entry name" value="DNA CYTOSINE-5- -METHYLTRANSFERASE 3-RELATED"/>
    <property type="match status" value="1"/>
</dbReference>
<dbReference type="Pfam" id="PF17980">
    <property type="entry name" value="ADD_DNMT3"/>
    <property type="match status" value="1"/>
</dbReference>
<dbReference type="Pfam" id="PF00145">
    <property type="entry name" value="DNA_methylase"/>
    <property type="match status" value="1"/>
</dbReference>
<dbReference type="Pfam" id="PF21255">
    <property type="entry name" value="DNMT3_ADD_GATA1-like"/>
    <property type="match status" value="1"/>
</dbReference>
<dbReference type="SUPFAM" id="SSF57903">
    <property type="entry name" value="FYVE/PHD zinc finger"/>
    <property type="match status" value="1"/>
</dbReference>
<dbReference type="SUPFAM" id="SSF53335">
    <property type="entry name" value="S-adenosyl-L-methionine-dependent methyltransferases"/>
    <property type="match status" value="1"/>
</dbReference>
<dbReference type="SUPFAM" id="SSF63748">
    <property type="entry name" value="Tudor/PWWP/MBT"/>
    <property type="match status" value="1"/>
</dbReference>
<dbReference type="PROSITE" id="PS51533">
    <property type="entry name" value="ADD"/>
    <property type="match status" value="1"/>
</dbReference>
<dbReference type="PROSITE" id="PS00094">
    <property type="entry name" value="C5_MTASE_1"/>
    <property type="match status" value="1"/>
</dbReference>
<dbReference type="PROSITE" id="PS51679">
    <property type="entry name" value="SAM_MT_C5"/>
    <property type="match status" value="1"/>
</dbReference>